<dbReference type="EC" id="3.1.4.11" evidence="4"/>
<dbReference type="EMBL" id="AB169170">
    <property type="protein sequence ID" value="BAE01262.1"/>
    <property type="molecule type" value="mRNA"/>
</dbReference>
<dbReference type="RefSeq" id="NP_001306482.1">
    <property type="nucleotide sequence ID" value="NM_001319553.1"/>
</dbReference>
<dbReference type="SMR" id="Q4R6L3"/>
<dbReference type="STRING" id="9541.ENSMFAP00000015794"/>
<dbReference type="eggNOG" id="KOG0169">
    <property type="taxonomic scope" value="Eukaryota"/>
</dbReference>
<dbReference type="Proteomes" id="UP000233100">
    <property type="component" value="Unplaced"/>
</dbReference>
<dbReference type="GO" id="GO:0005783">
    <property type="term" value="C:endoplasmic reticulum"/>
    <property type="evidence" value="ECO:0007669"/>
    <property type="project" value="UniProtKB-SubCell"/>
</dbReference>
<dbReference type="GO" id="GO:0005634">
    <property type="term" value="C:nucleus"/>
    <property type="evidence" value="ECO:0007669"/>
    <property type="project" value="UniProtKB-SubCell"/>
</dbReference>
<dbReference type="GO" id="GO:0005886">
    <property type="term" value="C:plasma membrane"/>
    <property type="evidence" value="ECO:0007669"/>
    <property type="project" value="TreeGrafter"/>
</dbReference>
<dbReference type="GO" id="GO:0005509">
    <property type="term" value="F:calcium ion binding"/>
    <property type="evidence" value="ECO:0007669"/>
    <property type="project" value="InterPro"/>
</dbReference>
<dbReference type="GO" id="GO:0001965">
    <property type="term" value="F:G-protein alpha-subunit binding"/>
    <property type="evidence" value="ECO:0000250"/>
    <property type="project" value="UniProtKB"/>
</dbReference>
<dbReference type="GO" id="GO:0004435">
    <property type="term" value="F:phosphatidylinositol-4,5-bisphosphate phospholipase C activity"/>
    <property type="evidence" value="ECO:0007669"/>
    <property type="project" value="UniProtKB-EC"/>
</dbReference>
<dbReference type="GO" id="GO:0035556">
    <property type="term" value="P:intracellular signal transduction"/>
    <property type="evidence" value="ECO:0007669"/>
    <property type="project" value="InterPro"/>
</dbReference>
<dbReference type="GO" id="GO:0016042">
    <property type="term" value="P:lipid catabolic process"/>
    <property type="evidence" value="ECO:0007669"/>
    <property type="project" value="UniProtKB-KW"/>
</dbReference>
<dbReference type="CDD" id="cd00275">
    <property type="entry name" value="C2_PLC_like"/>
    <property type="match status" value="1"/>
</dbReference>
<dbReference type="CDD" id="cd13363">
    <property type="entry name" value="PH_PLC_delta"/>
    <property type="match status" value="1"/>
</dbReference>
<dbReference type="FunFam" id="1.10.238.10:FF:000005">
    <property type="entry name" value="Phosphoinositide phospholipase C"/>
    <property type="match status" value="1"/>
</dbReference>
<dbReference type="FunFam" id="1.10.238.10:FF:000145">
    <property type="entry name" value="Phosphoinositide phospholipase C"/>
    <property type="match status" value="1"/>
</dbReference>
<dbReference type="FunFam" id="2.30.29.30:FF:000088">
    <property type="entry name" value="Phosphoinositide phospholipase C"/>
    <property type="match status" value="1"/>
</dbReference>
<dbReference type="FunFam" id="2.60.40.150:FF:000058">
    <property type="entry name" value="Phosphoinositide phospholipase C"/>
    <property type="match status" value="1"/>
</dbReference>
<dbReference type="Gene3D" id="2.60.40.150">
    <property type="entry name" value="C2 domain"/>
    <property type="match status" value="1"/>
</dbReference>
<dbReference type="Gene3D" id="1.10.238.10">
    <property type="entry name" value="EF-hand"/>
    <property type="match status" value="2"/>
</dbReference>
<dbReference type="Gene3D" id="3.20.20.190">
    <property type="entry name" value="Phosphatidylinositol (PI) phosphodiesterase"/>
    <property type="match status" value="1"/>
</dbReference>
<dbReference type="Gene3D" id="2.30.29.30">
    <property type="entry name" value="Pleckstrin-homology domain (PH domain)/Phosphotyrosine-binding domain (PTB)"/>
    <property type="match status" value="1"/>
</dbReference>
<dbReference type="InterPro" id="IPR000008">
    <property type="entry name" value="C2_dom"/>
</dbReference>
<dbReference type="InterPro" id="IPR035892">
    <property type="entry name" value="C2_domain_sf"/>
</dbReference>
<dbReference type="InterPro" id="IPR011992">
    <property type="entry name" value="EF-hand-dom_pair"/>
</dbReference>
<dbReference type="InterPro" id="IPR018247">
    <property type="entry name" value="EF_Hand_1_Ca_BS"/>
</dbReference>
<dbReference type="InterPro" id="IPR002048">
    <property type="entry name" value="EF_hand_dom"/>
</dbReference>
<dbReference type="InterPro" id="IPR011993">
    <property type="entry name" value="PH-like_dom_sf"/>
</dbReference>
<dbReference type="InterPro" id="IPR001849">
    <property type="entry name" value="PH_domain"/>
</dbReference>
<dbReference type="InterPro" id="IPR001192">
    <property type="entry name" value="PI-PLC_fam"/>
</dbReference>
<dbReference type="InterPro" id="IPR017946">
    <property type="entry name" value="PLC-like_Pdiesterase_TIM-brl"/>
</dbReference>
<dbReference type="InterPro" id="IPR015359">
    <property type="entry name" value="PLC_EF-hand-like"/>
</dbReference>
<dbReference type="InterPro" id="IPR000909">
    <property type="entry name" value="PLipase_C_PInositol-sp_X_dom"/>
</dbReference>
<dbReference type="InterPro" id="IPR001711">
    <property type="entry name" value="PLipase_C_Pinositol-sp_Y"/>
</dbReference>
<dbReference type="PANTHER" id="PTHR10336:SF31">
    <property type="entry name" value="1-PHOSPHATIDYLINOSITOL 4,5-BISPHOSPHATE PHOSPHODIESTERASE DELTA-4"/>
    <property type="match status" value="1"/>
</dbReference>
<dbReference type="PANTHER" id="PTHR10336">
    <property type="entry name" value="PHOSPHOINOSITIDE-SPECIFIC PHOSPHOLIPASE C FAMILY PROTEIN"/>
    <property type="match status" value="1"/>
</dbReference>
<dbReference type="Pfam" id="PF00168">
    <property type="entry name" value="C2"/>
    <property type="match status" value="1"/>
</dbReference>
<dbReference type="Pfam" id="PF13202">
    <property type="entry name" value="EF-hand_5"/>
    <property type="match status" value="1"/>
</dbReference>
<dbReference type="Pfam" id="PF09279">
    <property type="entry name" value="EF-hand_like"/>
    <property type="match status" value="1"/>
</dbReference>
<dbReference type="Pfam" id="PF00169">
    <property type="entry name" value="PH"/>
    <property type="match status" value="1"/>
</dbReference>
<dbReference type="Pfam" id="PF00388">
    <property type="entry name" value="PI-PLC-X"/>
    <property type="match status" value="1"/>
</dbReference>
<dbReference type="Pfam" id="PF00387">
    <property type="entry name" value="PI-PLC-Y"/>
    <property type="match status" value="1"/>
</dbReference>
<dbReference type="PRINTS" id="PR00390">
    <property type="entry name" value="PHPHLIPASEC"/>
</dbReference>
<dbReference type="SMART" id="SM00239">
    <property type="entry name" value="C2"/>
    <property type="match status" value="1"/>
</dbReference>
<dbReference type="SMART" id="SM00054">
    <property type="entry name" value="EFh"/>
    <property type="match status" value="3"/>
</dbReference>
<dbReference type="SMART" id="SM00233">
    <property type="entry name" value="PH"/>
    <property type="match status" value="1"/>
</dbReference>
<dbReference type="SMART" id="SM00148">
    <property type="entry name" value="PLCXc"/>
    <property type="match status" value="1"/>
</dbReference>
<dbReference type="SMART" id="SM00149">
    <property type="entry name" value="PLCYc"/>
    <property type="match status" value="1"/>
</dbReference>
<dbReference type="SUPFAM" id="SSF49562">
    <property type="entry name" value="C2 domain (Calcium/lipid-binding domain, CaLB)"/>
    <property type="match status" value="1"/>
</dbReference>
<dbReference type="SUPFAM" id="SSF47473">
    <property type="entry name" value="EF-hand"/>
    <property type="match status" value="1"/>
</dbReference>
<dbReference type="SUPFAM" id="SSF50729">
    <property type="entry name" value="PH domain-like"/>
    <property type="match status" value="1"/>
</dbReference>
<dbReference type="SUPFAM" id="SSF51695">
    <property type="entry name" value="PLC-like phosphodiesterases"/>
    <property type="match status" value="1"/>
</dbReference>
<dbReference type="PROSITE" id="PS50004">
    <property type="entry name" value="C2"/>
    <property type="match status" value="1"/>
</dbReference>
<dbReference type="PROSITE" id="PS00018">
    <property type="entry name" value="EF_HAND_1"/>
    <property type="match status" value="2"/>
</dbReference>
<dbReference type="PROSITE" id="PS50222">
    <property type="entry name" value="EF_HAND_2"/>
    <property type="match status" value="3"/>
</dbReference>
<dbReference type="PROSITE" id="PS50003">
    <property type="entry name" value="PH_DOMAIN"/>
    <property type="match status" value="1"/>
</dbReference>
<dbReference type="PROSITE" id="PS50007">
    <property type="entry name" value="PIPLC_X_DOMAIN"/>
    <property type="match status" value="1"/>
</dbReference>
<dbReference type="PROSITE" id="PS50008">
    <property type="entry name" value="PIPLC_Y_DOMAIN"/>
    <property type="match status" value="1"/>
</dbReference>
<gene>
    <name type="primary">PLCD4</name>
    <name type="ORF">QtsA-17742</name>
</gene>
<accession>Q4R6L3</accession>
<keyword id="KW-0106">Calcium</keyword>
<keyword id="KW-0963">Cytoplasm</keyword>
<keyword id="KW-0256">Endoplasmic reticulum</keyword>
<keyword id="KW-0378">Hydrolase</keyword>
<keyword id="KW-0442">Lipid degradation</keyword>
<keyword id="KW-0443">Lipid metabolism</keyword>
<keyword id="KW-0472">Membrane</keyword>
<keyword id="KW-0479">Metal-binding</keyword>
<keyword id="KW-0539">Nucleus</keyword>
<keyword id="KW-0597">Phosphoprotein</keyword>
<keyword id="KW-1185">Reference proteome</keyword>
<keyword id="KW-0677">Repeat</keyword>
<keyword id="KW-0807">Transducer</keyword>
<feature type="chain" id="PRO_0000306825" description="1-phosphatidylinositol 4,5-bisphosphate phosphodiesterase delta-4">
    <location>
        <begin position="1"/>
        <end position="799"/>
    </location>
</feature>
<feature type="domain" description="PH" evidence="6">
    <location>
        <begin position="16"/>
        <end position="124"/>
    </location>
</feature>
<feature type="domain" description="EF-hand 1" evidence="9">
    <location>
        <begin position="134"/>
        <end position="169"/>
    </location>
</feature>
<feature type="domain" description="EF-hand 2" evidence="9">
    <location>
        <begin position="170"/>
        <end position="205"/>
    </location>
</feature>
<feature type="domain" description="EF-hand 3" evidence="9">
    <location>
        <begin position="206"/>
        <end position="237"/>
    </location>
</feature>
<feature type="domain" description="PI-PLC X-box" evidence="7">
    <location>
        <begin position="290"/>
        <end position="435"/>
    </location>
</feature>
<feature type="domain" description="PI-PLC Y-box" evidence="8">
    <location>
        <begin position="530"/>
        <end position="646"/>
    </location>
</feature>
<feature type="domain" description="C2" evidence="5">
    <location>
        <begin position="646"/>
        <end position="773"/>
    </location>
</feature>
<feature type="region of interest" description="Substrate binding" evidence="1">
    <location>
        <begin position="26"/>
        <end position="53"/>
    </location>
</feature>
<feature type="short sequence motif" description="GBA" evidence="4">
    <location>
        <begin position="213"/>
        <end position="243"/>
    </location>
</feature>
<feature type="short sequence motif" description="PDZ-binding">
    <location>
        <begin position="768"/>
        <end position="771"/>
    </location>
</feature>
<feature type="active site" evidence="7">
    <location>
        <position position="305"/>
    </location>
</feature>
<feature type="active site" evidence="7">
    <location>
        <position position="350"/>
    </location>
</feature>
<feature type="binding site" evidence="9">
    <location>
        <position position="147"/>
    </location>
    <ligand>
        <name>Ca(2+)</name>
        <dbReference type="ChEBI" id="CHEBI:29108"/>
        <label>1</label>
    </ligand>
</feature>
<feature type="binding site" evidence="9">
    <location>
        <position position="149"/>
    </location>
    <ligand>
        <name>Ca(2+)</name>
        <dbReference type="ChEBI" id="CHEBI:29108"/>
        <label>1</label>
    </ligand>
</feature>
<feature type="binding site" evidence="9">
    <location>
        <position position="151"/>
    </location>
    <ligand>
        <name>Ca(2+)</name>
        <dbReference type="ChEBI" id="CHEBI:29108"/>
        <label>1</label>
    </ligand>
</feature>
<feature type="binding site" evidence="9">
    <location>
        <position position="153"/>
    </location>
    <ligand>
        <name>Ca(2+)</name>
        <dbReference type="ChEBI" id="CHEBI:29108"/>
        <label>1</label>
    </ligand>
</feature>
<feature type="binding site" evidence="9">
    <location>
        <position position="158"/>
    </location>
    <ligand>
        <name>Ca(2+)</name>
        <dbReference type="ChEBI" id="CHEBI:29108"/>
        <label>1</label>
    </ligand>
</feature>
<feature type="binding site" evidence="9">
    <location>
        <position position="183"/>
    </location>
    <ligand>
        <name>Ca(2+)</name>
        <dbReference type="ChEBI" id="CHEBI:29108"/>
        <label>2</label>
    </ligand>
</feature>
<feature type="binding site" evidence="9">
    <location>
        <position position="185"/>
    </location>
    <ligand>
        <name>Ca(2+)</name>
        <dbReference type="ChEBI" id="CHEBI:29108"/>
        <label>2</label>
    </ligand>
</feature>
<feature type="binding site" evidence="9">
    <location>
        <position position="187"/>
    </location>
    <ligand>
        <name>Ca(2+)</name>
        <dbReference type="ChEBI" id="CHEBI:29108"/>
        <label>2</label>
    </ligand>
</feature>
<feature type="binding site" evidence="9">
    <location>
        <position position="189"/>
    </location>
    <ligand>
        <name>Ca(2+)</name>
        <dbReference type="ChEBI" id="CHEBI:29108"/>
        <label>2</label>
    </ligand>
</feature>
<feature type="binding site" evidence="9">
    <location>
        <position position="194"/>
    </location>
    <ligand>
        <name>Ca(2+)</name>
        <dbReference type="ChEBI" id="CHEBI:29108"/>
        <label>2</label>
    </ligand>
</feature>
<feature type="binding site" evidence="1">
    <location>
        <position position="306"/>
    </location>
    <ligand>
        <name>Ca(2+)</name>
        <dbReference type="ChEBI" id="CHEBI:29108"/>
        <label>3</label>
        <note>catalytic</note>
    </ligand>
</feature>
<feature type="binding site" evidence="1">
    <location>
        <position position="335"/>
    </location>
    <ligand>
        <name>Ca(2+)</name>
        <dbReference type="ChEBI" id="CHEBI:29108"/>
        <label>3</label>
        <note>catalytic</note>
    </ligand>
</feature>
<feature type="binding site" evidence="1">
    <location>
        <position position="337"/>
    </location>
    <ligand>
        <name>Ca(2+)</name>
        <dbReference type="ChEBI" id="CHEBI:29108"/>
        <label>3</label>
        <note>catalytic</note>
    </ligand>
</feature>
<feature type="binding site" evidence="1">
    <location>
        <position position="384"/>
    </location>
    <ligand>
        <name>Ca(2+)</name>
        <dbReference type="ChEBI" id="CHEBI:29108"/>
        <label>3</label>
        <note>catalytic</note>
    </ligand>
</feature>
<feature type="binding site" evidence="1">
    <location>
        <position position="433"/>
    </location>
    <ligand>
        <name>substrate</name>
    </ligand>
</feature>
<feature type="binding site" evidence="1">
    <location>
        <position position="435"/>
    </location>
    <ligand>
        <name>substrate</name>
    </ligand>
</feature>
<feature type="binding site" evidence="1">
    <location>
        <position position="559"/>
    </location>
    <ligand>
        <name>substrate</name>
    </ligand>
</feature>
<feature type="binding site" evidence="1">
    <location>
        <position position="586"/>
    </location>
    <ligand>
        <name>substrate</name>
    </ligand>
</feature>
<feature type="binding site" evidence="1">
    <location>
        <position position="687"/>
    </location>
    <ligand>
        <name>Ca(2+)</name>
        <dbReference type="ChEBI" id="CHEBI:29108"/>
        <label>4</label>
    </ligand>
</feature>
<feature type="binding site" evidence="1">
    <location>
        <position position="689"/>
    </location>
    <ligand>
        <name>Ca(2+)</name>
        <dbReference type="ChEBI" id="CHEBI:29108"/>
        <label>4</label>
    </ligand>
</feature>
<feature type="binding site" evidence="1">
    <location>
        <position position="713"/>
    </location>
    <ligand>
        <name>Ca(2+)</name>
        <dbReference type="ChEBI" id="CHEBI:29108"/>
        <label>4</label>
    </ligand>
</feature>
<feature type="binding site" evidence="1">
    <location>
        <position position="742"/>
    </location>
    <ligand>
        <name>Ca(2+)</name>
        <dbReference type="ChEBI" id="CHEBI:29108"/>
        <label>5</label>
    </ligand>
</feature>
<feature type="binding site" evidence="1">
    <location>
        <position position="743"/>
    </location>
    <ligand>
        <name>Ca(2+)</name>
        <dbReference type="ChEBI" id="CHEBI:29108"/>
        <label>5</label>
    </ligand>
</feature>
<feature type="binding site" evidence="1">
    <location>
        <position position="744"/>
    </location>
    <ligand>
        <name>Ca(2+)</name>
        <dbReference type="ChEBI" id="CHEBI:29108"/>
        <label>5</label>
    </ligand>
</feature>
<feature type="modified residue" description="Phosphoserine" evidence="2">
    <location>
        <position position="460"/>
    </location>
</feature>
<protein>
    <recommendedName>
        <fullName>1-phosphatidylinositol 4,5-bisphosphate phosphodiesterase delta-4</fullName>
        <ecNumber evidence="4">3.1.4.11</ecNumber>
    </recommendedName>
    <alternativeName>
        <fullName>Phosphoinositide phospholipase C-delta-4</fullName>
    </alternativeName>
    <alternativeName>
        <fullName>Phospholipase C-delta-4</fullName>
        <shortName>PLC-delta-4</shortName>
    </alternativeName>
</protein>
<sequence>MASLLQDRLTTDQDLLLMQEGMPMRKVRSKSWKKLRYFRLQNDGMTVWHARQARGSAKPSFSISDVETIRNGHDSELLRSLTEELPLEQGFTVVFHGRRSNLDLVANSVEEAQIWMRGLHLLVDLVTSMDHQERLDQWLSDWFQRGDKNQDGKMSFQEVQRLLHLMNVEMDQEYAFSLFQAADTSQSGTLEGEEFVEFYKALTKRAEVQELFESFSADGQKLTLLEFSDFLREEQKERDCTSELALELIDRYEPSDSGKLRHVLSMDGFLSYLCSKDGDIFNPACLPIYQDMTQPLNHYFICSSHNTYLVGDQLCGQSSVEGYIRALKRGCRCVEVDVWDGPSGEPVVYHGHTLTSRILFKDVVATVAQYAFQTSDYPVILSLETHCSWEQQQTMARHLTEILGEQLLSTTLDGVLPTQLPSPEELRRKILVKGKKLTLEEDLEYEEEEVEPGLEGEHESELALESQFETESEPEPQEQNLQIKDKKKVVTCPLFCPSICCQIVAQAPISKPGSLLLSQQKSKTILCPALSSLVIYLKSVSFRSFTHSKKHYHFYEISSFSETKAKRLIKEAGNEFVQHNTWQLSRVYPSGLRTDSSNYNPQELWNAGCQMVAMNMQTAGLEMDICDGHFRQNGGCGYVLKPDFLRDNQSSFHPERPISPFKAQTLLIQVISGQQLPKLNKTKEGSIVDPLVKVQIFGVRLDTARQETNYVENNGFNPYWGQTLCFRVLVPELAMLRFVVMDYDWKSRNDFIGQYTLPWSCMQQGYRHIHLLSKDGISLCPASIFVYICIREGLEGDES</sequence>
<reference key="1">
    <citation type="submission" date="2005-06" db="EMBL/GenBank/DDBJ databases">
        <title>DNA sequences of macaque genes expressed in brain or testis and its evolutionary implications.</title>
        <authorList>
            <consortium name="International consortium for macaque cDNA sequencing and analysis"/>
        </authorList>
    </citation>
    <scope>NUCLEOTIDE SEQUENCE [LARGE SCALE MRNA]</scope>
    <source>
        <tissue>Testis</tissue>
    </source>
</reference>
<organism>
    <name type="scientific">Macaca fascicularis</name>
    <name type="common">Crab-eating macaque</name>
    <name type="synonym">Cynomolgus monkey</name>
    <dbReference type="NCBI Taxonomy" id="9541"/>
    <lineage>
        <taxon>Eukaryota</taxon>
        <taxon>Metazoa</taxon>
        <taxon>Chordata</taxon>
        <taxon>Craniata</taxon>
        <taxon>Vertebrata</taxon>
        <taxon>Euteleostomi</taxon>
        <taxon>Mammalia</taxon>
        <taxon>Eutheria</taxon>
        <taxon>Euarchontoglires</taxon>
        <taxon>Primates</taxon>
        <taxon>Haplorrhini</taxon>
        <taxon>Catarrhini</taxon>
        <taxon>Cercopithecidae</taxon>
        <taxon>Cercopithecinae</taxon>
        <taxon>Macaca</taxon>
    </lineage>
</organism>
<name>PLCD4_MACFA</name>
<comment type="function">
    <text evidence="1">Hydrolyzes the phosphatidylinositol 4,5-bisphosphate (PIP2) to generate 2 second messenger molecules diacylglycerol (DAG) and inositol 1,4,5-trisphosphate (IP3). DAG mediates the activation of protein kinase C (PKC), while IP3 releases Ca(2+) from intracellular stores. Required for acrosome reaction in sperm during fertilization, probably by acting as an important enzyme for intracellular Ca(2+) mobilization in the zona pellucida-induced acrosome reaction. May play a role in cell growth. Modulates the liver regeneration in cooperation with nuclear PKC. Overexpression up-regulates the Erk signaling pathway and proliferation (By similarity).</text>
</comment>
<comment type="catalytic activity">
    <reaction evidence="4">
        <text>a 1,2-diacyl-sn-glycero-3-phospho-(1D-myo-inositol-4,5-bisphosphate) + H2O = 1D-myo-inositol 1,4,5-trisphosphate + a 1,2-diacyl-sn-glycerol + H(+)</text>
        <dbReference type="Rhea" id="RHEA:33179"/>
        <dbReference type="ChEBI" id="CHEBI:15377"/>
        <dbReference type="ChEBI" id="CHEBI:15378"/>
        <dbReference type="ChEBI" id="CHEBI:17815"/>
        <dbReference type="ChEBI" id="CHEBI:58456"/>
        <dbReference type="ChEBI" id="CHEBI:203600"/>
        <dbReference type="EC" id="3.1.4.11"/>
    </reaction>
    <physiologicalReaction direction="left-to-right" evidence="4">
        <dbReference type="Rhea" id="RHEA:33180"/>
    </physiologicalReaction>
</comment>
<comment type="catalytic activity">
    <reaction evidence="4">
        <text>a 1,2-diacyl-sn-glycero-3-phospho-(1D-myo-inositol) + H2O = 1D-myo-inositol 1-phosphate + a 1,2-diacyl-sn-glycerol + H(+)</text>
        <dbReference type="Rhea" id="RHEA:43484"/>
        <dbReference type="ChEBI" id="CHEBI:15377"/>
        <dbReference type="ChEBI" id="CHEBI:15378"/>
        <dbReference type="ChEBI" id="CHEBI:17815"/>
        <dbReference type="ChEBI" id="CHEBI:57880"/>
        <dbReference type="ChEBI" id="CHEBI:58433"/>
    </reaction>
    <physiologicalReaction direction="left-to-right" evidence="4">
        <dbReference type="Rhea" id="RHEA:43485"/>
    </physiologicalReaction>
</comment>
<comment type="cofactor">
    <cofactor evidence="5">
        <name>Ca(2+)</name>
        <dbReference type="ChEBI" id="CHEBI:29108"/>
    </cofactor>
    <text evidence="1">Binds 5 Ca(2+) ions per subunit. Two of the Ca(2+) ions are bound to the C2 domain.</text>
</comment>
<comment type="subunit">
    <text evidence="3 4">Interacts with GRIP1 (By similarity). Interacts (via GBA motif) with guanine nucleotide-binding protein G(i) alpha subunit GNAI3 (inactive GDP-bound form); low-affinity interaction (By similarity).</text>
</comment>
<comment type="subcellular location">
    <subcellularLocation>
        <location evidence="1">Membrane</location>
        <topology evidence="1">Peripheral membrane protein</topology>
    </subcellularLocation>
    <subcellularLocation>
        <location evidence="1">Nucleus</location>
    </subcellularLocation>
    <subcellularLocation>
        <location evidence="1">Cytoplasm</location>
    </subcellularLocation>
    <subcellularLocation>
        <location evidence="1">Endoplasmic reticulum</location>
    </subcellularLocation>
    <text evidence="1">Localizes primarily to intracellular membranes mostly to the endoplasmic reticulum.</text>
</comment>
<comment type="domain">
    <text evidence="1">The PDZ-binding motif mediates the interaction with GRIP1.</text>
</comment>
<comment type="domain">
    <text evidence="1">The C2 domain mediates pre-localization to the membrane prior to Ca(2+) import and non-selective Ca(2+)-mediated targeting to various cellular membranes.</text>
</comment>
<comment type="domain">
    <text evidence="1">The PH domain is not a critical determinant of the membrane localization.</text>
</comment>
<comment type="domain">
    <text evidence="4">The GBA (G-alpha binding and activating) motif mediates binding to the alpha subunits of guanine nucleotide-binding proteins (G proteins).</text>
</comment>
<evidence type="ECO:0000250" key="1"/>
<evidence type="ECO:0000250" key="2">
    <source>
        <dbReference type="UniProtKB" id="Q62711"/>
    </source>
</evidence>
<evidence type="ECO:0000250" key="3">
    <source>
        <dbReference type="UniProtKB" id="Q8K3R3"/>
    </source>
</evidence>
<evidence type="ECO:0000250" key="4">
    <source>
        <dbReference type="UniProtKB" id="Q9BRC7"/>
    </source>
</evidence>
<evidence type="ECO:0000255" key="5">
    <source>
        <dbReference type="PROSITE-ProRule" id="PRU00041"/>
    </source>
</evidence>
<evidence type="ECO:0000255" key="6">
    <source>
        <dbReference type="PROSITE-ProRule" id="PRU00145"/>
    </source>
</evidence>
<evidence type="ECO:0000255" key="7">
    <source>
        <dbReference type="PROSITE-ProRule" id="PRU00270"/>
    </source>
</evidence>
<evidence type="ECO:0000255" key="8">
    <source>
        <dbReference type="PROSITE-ProRule" id="PRU00271"/>
    </source>
</evidence>
<evidence type="ECO:0000255" key="9">
    <source>
        <dbReference type="PROSITE-ProRule" id="PRU00448"/>
    </source>
</evidence>
<proteinExistence type="evidence at transcript level"/>